<accession>P68398</accession>
<accession>P30134</accession>
<accession>Q2MAH1</accession>
<comment type="function">
    <text evidence="1 3 5">Catalyzes the deamination of adenosine to inosine at the wobble position 34 of tRNA(Arg2). Essential for cell viability.</text>
</comment>
<comment type="catalytic activity">
    <reaction evidence="1 3 5">
        <text>adenosine(34) in tRNA + H2O + H(+) = inosine(34) in tRNA + NH4(+)</text>
        <dbReference type="Rhea" id="RHEA:43168"/>
        <dbReference type="Rhea" id="RHEA-COMP:10373"/>
        <dbReference type="Rhea" id="RHEA-COMP:10374"/>
        <dbReference type="ChEBI" id="CHEBI:15377"/>
        <dbReference type="ChEBI" id="CHEBI:15378"/>
        <dbReference type="ChEBI" id="CHEBI:28938"/>
        <dbReference type="ChEBI" id="CHEBI:74411"/>
        <dbReference type="ChEBI" id="CHEBI:82852"/>
        <dbReference type="EC" id="3.5.4.33"/>
    </reaction>
</comment>
<comment type="cofactor">
    <cofactor evidence="1 5">
        <name>Zn(2+)</name>
        <dbReference type="ChEBI" id="CHEBI:29105"/>
    </cofactor>
    <text evidence="1 5">Binds 1 zinc ion per subunit.</text>
</comment>
<comment type="biophysicochemical properties">
    <kinetics>
        <KM evidence="5">0.83 uM for tRNA(Arg2)</KM>
        <text evidence="5">kcat is 13 min(-1).</text>
    </kinetics>
</comment>
<comment type="subunit">
    <text evidence="1 3 5">Homodimer.</text>
</comment>
<comment type="disruption phenotype">
    <text evidence="4">Mutation makes E.coli resistant to the toxic proteins encoded by the gef gene family.</text>
</comment>
<comment type="similarity">
    <text evidence="1">Belongs to the cytidine and deoxycytidylate deaminase family.</text>
</comment>
<comment type="sequence caution" evidence="6">
    <conflict type="erroneous initiation">
        <sequence resource="EMBL-CDS" id="AAA79821"/>
    </conflict>
    <text>Extended N-terminus.</text>
</comment>
<comment type="sequence caution" evidence="6">
    <conflict type="erroneous initiation">
        <sequence resource="EMBL-CDS" id="BAA10909"/>
    </conflict>
    <text>Extended N-terminus.</text>
</comment>
<comment type="sequence caution" evidence="6">
    <conflict type="erroneous initiation">
        <sequence resource="EMBL-CDS" id="BAE76735"/>
    </conflict>
    <text>Extended N-terminus.</text>
</comment>
<comment type="sequence caution" evidence="6">
    <conflict type="erroneous initiation">
        <sequence resource="EMBL-CDS" id="CAA51064"/>
    </conflict>
    <text>Extended N-terminus.</text>
</comment>
<keyword id="KW-0002">3D-structure</keyword>
<keyword id="KW-0378">Hydrolase</keyword>
<keyword id="KW-0479">Metal-binding</keyword>
<keyword id="KW-1185">Reference proteome</keyword>
<keyword id="KW-0819">tRNA processing</keyword>
<keyword id="KW-0862">Zinc</keyword>
<reference key="1">
    <citation type="journal article" date="1992" name="Mol. Microbiol.">
        <title>Analysis of an Escherichia coli mutant strain resistant to the cell-killing function encoded by the gef gene family.</title>
        <authorList>
            <person name="Poulsen L.K."/>
            <person name="Larsen N.W."/>
            <person name="Molin S."/>
            <person name="Andersson P."/>
        </authorList>
    </citation>
    <scope>NUCLEOTIDE SEQUENCE [GENOMIC DNA]</scope>
    <scope>DISRUPTION PHENOTYPE</scope>
    <scope>MUTAGENESIS OF ASP-53</scope>
    <source>
        <strain>NWL37</strain>
    </source>
</reference>
<reference key="2">
    <citation type="submission" date="1995-09" db="EMBL/GenBank/DDBJ databases">
        <authorList>
            <person name="Nashimoto H."/>
            <person name="Saito N."/>
        </authorList>
    </citation>
    <scope>NUCLEOTIDE SEQUENCE [GENOMIC DNA]</scope>
    <source>
        <strain>K12</strain>
    </source>
</reference>
<reference key="3">
    <citation type="journal article" date="1997" name="Science">
        <title>The complete genome sequence of Escherichia coli K-12.</title>
        <authorList>
            <person name="Blattner F.R."/>
            <person name="Plunkett G. III"/>
            <person name="Bloch C.A."/>
            <person name="Perna N.T."/>
            <person name="Burland V."/>
            <person name="Riley M."/>
            <person name="Collado-Vides J."/>
            <person name="Glasner J.D."/>
            <person name="Rode C.K."/>
            <person name="Mayhew G.F."/>
            <person name="Gregor J."/>
            <person name="Davis N.W."/>
            <person name="Kirkpatrick H.A."/>
            <person name="Goeden M.A."/>
            <person name="Rose D.J."/>
            <person name="Mau B."/>
            <person name="Shao Y."/>
        </authorList>
    </citation>
    <scope>NUCLEOTIDE SEQUENCE [LARGE SCALE GENOMIC DNA]</scope>
    <source>
        <strain>K12 / MG1655 / ATCC 47076</strain>
    </source>
</reference>
<reference key="4">
    <citation type="journal article" date="2006" name="Mol. Syst. Biol.">
        <title>Highly accurate genome sequences of Escherichia coli K-12 strains MG1655 and W3110.</title>
        <authorList>
            <person name="Hayashi K."/>
            <person name="Morooka N."/>
            <person name="Yamamoto Y."/>
            <person name="Fujita K."/>
            <person name="Isono K."/>
            <person name="Choi S."/>
            <person name="Ohtsubo E."/>
            <person name="Baba T."/>
            <person name="Wanner B.L."/>
            <person name="Mori H."/>
            <person name="Horiuchi T."/>
        </authorList>
    </citation>
    <scope>NUCLEOTIDE SEQUENCE [LARGE SCALE GENOMIC DNA]</scope>
    <source>
        <strain>K12 / W3110 / ATCC 27325 / DSM 5911</strain>
    </source>
</reference>
<reference key="5">
    <citation type="journal article" date="2002" name="EMBO J.">
        <title>tadA, an essential tRNA-specific adenosine deaminase from Escherichia coli.</title>
        <authorList>
            <person name="Wolf J."/>
            <person name="Gerber A.P."/>
            <person name="Keller W."/>
        </authorList>
    </citation>
    <scope>FUNCTION</scope>
    <scope>CATALYTIC ACTIVITY</scope>
    <scope>SUBUNIT</scope>
    <scope>CHARACTERIZATION</scope>
</reference>
<reference key="6">
    <citation type="journal article" date="2006" name="Biochemistry">
        <title>Structural and kinetic characterization of Escherichia coli TadA, the wobble-specific tRNA deaminase.</title>
        <authorList>
            <person name="Kim J."/>
            <person name="Malashkevich V."/>
            <person name="Roday S."/>
            <person name="Lisbin M."/>
            <person name="Schramm V.L."/>
            <person name="Almo S.C."/>
        </authorList>
    </citation>
    <scope>X-RAY CRYSTALLOGRAPHY (2.03 ANGSTROMS) OF 2-167 IN COMPLEX WITH ZINC</scope>
    <scope>FUNCTION</scope>
    <scope>CATALYTIC ACTIVITY</scope>
    <scope>COFACTOR</scope>
    <scope>BIOPHYSICOCHEMICAL PROPERTIES</scope>
    <scope>SUBUNIT</scope>
    <scope>ACTIVE SITE</scope>
</reference>
<sequence>MSEVEFSHEYWMRHALTLAKRAWDEREVPVGAVLVHNNRVIGEGWNRPIGRHDPTAHAEIMALRQGGLVMQNYRLIDATLYVTLEPCVMCAGAMIHSRIGRVVFGARDAKTGAAGSLMDVLHHPGMNHRVEITEGILADECAALLSDFFRMRRQEIKAQKKAQSSTD</sequence>
<gene>
    <name evidence="1" type="primary">tadA</name>
    <name type="synonym">yfhC</name>
    <name type="ordered locus">b2559</name>
    <name type="ordered locus">JW2543</name>
</gene>
<evidence type="ECO:0000255" key="1">
    <source>
        <dbReference type="HAMAP-Rule" id="MF_00972"/>
    </source>
</evidence>
<evidence type="ECO:0000255" key="2">
    <source>
        <dbReference type="PROSITE-ProRule" id="PRU01083"/>
    </source>
</evidence>
<evidence type="ECO:0000269" key="3">
    <source>
    </source>
</evidence>
<evidence type="ECO:0000269" key="4">
    <source>
    </source>
</evidence>
<evidence type="ECO:0000269" key="5">
    <source>
    </source>
</evidence>
<evidence type="ECO:0000305" key="6"/>
<evidence type="ECO:0000305" key="7">
    <source>
    </source>
</evidence>
<evidence type="ECO:0007829" key="8">
    <source>
        <dbReference type="PDB" id="1Z3A"/>
    </source>
</evidence>
<evidence type="ECO:0007829" key="9">
    <source>
        <dbReference type="PDB" id="8E2Q"/>
    </source>
</evidence>
<evidence type="ECO:0007829" key="10">
    <source>
        <dbReference type="PDB" id="8E2R"/>
    </source>
</evidence>
<evidence type="ECO:0007829" key="11">
    <source>
        <dbReference type="PDB" id="8E2S"/>
    </source>
</evidence>
<dbReference type="EC" id="3.5.4.33" evidence="1"/>
<dbReference type="EMBL" id="X72336">
    <property type="protein sequence ID" value="CAA51064.1"/>
    <property type="status" value="ALT_INIT"/>
    <property type="molecule type" value="Genomic_DNA"/>
</dbReference>
<dbReference type="EMBL" id="D64044">
    <property type="protein sequence ID" value="BAA10909.1"/>
    <property type="status" value="ALT_INIT"/>
    <property type="molecule type" value="Genomic_DNA"/>
</dbReference>
<dbReference type="EMBL" id="U36841">
    <property type="protein sequence ID" value="AAA79821.1"/>
    <property type="status" value="ALT_INIT"/>
    <property type="molecule type" value="Genomic_DNA"/>
</dbReference>
<dbReference type="EMBL" id="U00096">
    <property type="protein sequence ID" value="AAC75612.2"/>
    <property type="molecule type" value="Genomic_DNA"/>
</dbReference>
<dbReference type="EMBL" id="AP009048">
    <property type="protein sequence ID" value="BAE76735.1"/>
    <property type="status" value="ALT_INIT"/>
    <property type="molecule type" value="Genomic_DNA"/>
</dbReference>
<dbReference type="PIR" id="F65033">
    <property type="entry name" value="F65033"/>
</dbReference>
<dbReference type="RefSeq" id="NP_417054.2">
    <property type="nucleotide sequence ID" value="NC_000913.3"/>
</dbReference>
<dbReference type="RefSeq" id="WP_001297409.1">
    <property type="nucleotide sequence ID" value="NZ_STEB01000011.1"/>
</dbReference>
<dbReference type="PDB" id="1Z3A">
    <property type="method" value="X-ray"/>
    <property type="resolution" value="2.03 A"/>
    <property type="chains" value="A/B=2-167"/>
</dbReference>
<dbReference type="PDB" id="6VPC">
    <property type="method" value="EM"/>
    <property type="resolution" value="3.20 A"/>
    <property type="chains" value="E/F=1-167"/>
</dbReference>
<dbReference type="PDB" id="8E2P">
    <property type="method" value="X-ray"/>
    <property type="resolution" value="2.72 A"/>
    <property type="chains" value="A/B/C/D=1-167"/>
</dbReference>
<dbReference type="PDB" id="8E2Q">
    <property type="method" value="X-ray"/>
    <property type="resolution" value="2.34 A"/>
    <property type="chains" value="A/B/C/D=1-167"/>
</dbReference>
<dbReference type="PDB" id="8E2R">
    <property type="method" value="X-ray"/>
    <property type="resolution" value="2.22 A"/>
    <property type="chains" value="A/B=1-167"/>
</dbReference>
<dbReference type="PDB" id="8E2S">
    <property type="method" value="X-ray"/>
    <property type="resolution" value="2.95 A"/>
    <property type="chains" value="A/B/C/D/E/F/G/H=1-167"/>
</dbReference>
<dbReference type="PDBsum" id="1Z3A"/>
<dbReference type="PDBsum" id="6VPC"/>
<dbReference type="PDBsum" id="8E2P"/>
<dbReference type="PDBsum" id="8E2Q"/>
<dbReference type="PDBsum" id="8E2R"/>
<dbReference type="PDBsum" id="8E2S"/>
<dbReference type="SMR" id="P68398"/>
<dbReference type="BioGRID" id="4261245">
    <property type="interactions" value="63"/>
</dbReference>
<dbReference type="FunCoup" id="P68398">
    <property type="interactions" value="614"/>
</dbReference>
<dbReference type="IntAct" id="P68398">
    <property type="interactions" value="4"/>
</dbReference>
<dbReference type="STRING" id="511145.b2559"/>
<dbReference type="jPOST" id="P68398"/>
<dbReference type="PaxDb" id="511145-b2559"/>
<dbReference type="EnsemblBacteria" id="AAC75612">
    <property type="protein sequence ID" value="AAC75612"/>
    <property type="gene ID" value="b2559"/>
</dbReference>
<dbReference type="GeneID" id="75206252"/>
<dbReference type="GeneID" id="947027"/>
<dbReference type="KEGG" id="ecj:JW2543"/>
<dbReference type="KEGG" id="eco:b2559"/>
<dbReference type="KEGG" id="ecoc:C3026_14165"/>
<dbReference type="PATRIC" id="fig|1411691.4.peg.4175"/>
<dbReference type="EchoBASE" id="EB1346"/>
<dbReference type="eggNOG" id="COG0590">
    <property type="taxonomic scope" value="Bacteria"/>
</dbReference>
<dbReference type="HOGENOM" id="CLU_025810_3_0_6"/>
<dbReference type="InParanoid" id="P68398"/>
<dbReference type="OMA" id="PCQMCAG"/>
<dbReference type="PhylomeDB" id="P68398"/>
<dbReference type="BioCyc" id="EcoCyc:EG11372-MONOMER"/>
<dbReference type="BioCyc" id="MetaCyc:EG11372-MONOMER"/>
<dbReference type="BRENDA" id="3.5.4.33">
    <property type="organism ID" value="2026"/>
</dbReference>
<dbReference type="EvolutionaryTrace" id="P68398"/>
<dbReference type="PRO" id="PR:P68398"/>
<dbReference type="Proteomes" id="UP000000625">
    <property type="component" value="Chromosome"/>
</dbReference>
<dbReference type="GO" id="GO:0042803">
    <property type="term" value="F:protein homodimerization activity"/>
    <property type="evidence" value="ECO:0000314"/>
    <property type="project" value="EcoCyc"/>
</dbReference>
<dbReference type="GO" id="GO:0052717">
    <property type="term" value="F:tRNA-specific adenosine-34 deaminase activity"/>
    <property type="evidence" value="ECO:0000314"/>
    <property type="project" value="EcoCyc"/>
</dbReference>
<dbReference type="GO" id="GO:0008270">
    <property type="term" value="F:zinc ion binding"/>
    <property type="evidence" value="ECO:0000314"/>
    <property type="project" value="EcoCyc"/>
</dbReference>
<dbReference type="GO" id="GO:0006382">
    <property type="term" value="P:adenosine to inosine editing"/>
    <property type="evidence" value="ECO:0000315"/>
    <property type="project" value="EcoCyc"/>
</dbReference>
<dbReference type="GO" id="GO:0002100">
    <property type="term" value="P:tRNA wobble adenosine to inosine editing"/>
    <property type="evidence" value="ECO:0000314"/>
    <property type="project" value="EcoCyc"/>
</dbReference>
<dbReference type="CDD" id="cd01285">
    <property type="entry name" value="nucleoside_deaminase"/>
    <property type="match status" value="1"/>
</dbReference>
<dbReference type="FunFam" id="3.40.140.10:FF:000005">
    <property type="entry name" value="tRNA-specific adenosine deaminase"/>
    <property type="match status" value="1"/>
</dbReference>
<dbReference type="Gene3D" id="3.40.140.10">
    <property type="entry name" value="Cytidine Deaminase, domain 2"/>
    <property type="match status" value="1"/>
</dbReference>
<dbReference type="HAMAP" id="MF_00972">
    <property type="entry name" value="tRNA_aden_deaminase"/>
    <property type="match status" value="1"/>
</dbReference>
<dbReference type="InterPro" id="IPR016192">
    <property type="entry name" value="APOBEC/CMP_deaminase_Zn-bd"/>
</dbReference>
<dbReference type="InterPro" id="IPR002125">
    <property type="entry name" value="CMP_dCMP_dom"/>
</dbReference>
<dbReference type="InterPro" id="IPR016193">
    <property type="entry name" value="Cytidine_deaminase-like"/>
</dbReference>
<dbReference type="InterPro" id="IPR028883">
    <property type="entry name" value="tRNA_aden_deaminase"/>
</dbReference>
<dbReference type="NCBIfam" id="NF008113">
    <property type="entry name" value="PRK10860.1"/>
    <property type="match status" value="1"/>
</dbReference>
<dbReference type="PANTHER" id="PTHR11079">
    <property type="entry name" value="CYTOSINE DEAMINASE FAMILY MEMBER"/>
    <property type="match status" value="1"/>
</dbReference>
<dbReference type="PANTHER" id="PTHR11079:SF202">
    <property type="entry name" value="TRNA-SPECIFIC ADENOSINE DEAMINASE"/>
    <property type="match status" value="1"/>
</dbReference>
<dbReference type="Pfam" id="PF14437">
    <property type="entry name" value="MafB19-deam"/>
    <property type="match status" value="1"/>
</dbReference>
<dbReference type="SUPFAM" id="SSF53927">
    <property type="entry name" value="Cytidine deaminase-like"/>
    <property type="match status" value="1"/>
</dbReference>
<dbReference type="PROSITE" id="PS00903">
    <property type="entry name" value="CYT_DCMP_DEAMINASES_1"/>
    <property type="match status" value="1"/>
</dbReference>
<dbReference type="PROSITE" id="PS51747">
    <property type="entry name" value="CYT_DCMP_DEAMINASES_2"/>
    <property type="match status" value="1"/>
</dbReference>
<feature type="chain" id="PRO_0000171733" description="tRNA-specific adenosine deaminase">
    <location>
        <begin position="1"/>
        <end position="167"/>
    </location>
</feature>
<feature type="domain" description="CMP/dCMP-type deaminase" evidence="2">
    <location>
        <begin position="6"/>
        <end position="117"/>
    </location>
</feature>
<feature type="active site" description="Proton donor" evidence="7">
    <location>
        <position position="59"/>
    </location>
</feature>
<feature type="binding site" evidence="1 5">
    <location>
        <position position="57"/>
    </location>
    <ligand>
        <name>Zn(2+)</name>
        <dbReference type="ChEBI" id="CHEBI:29105"/>
        <note>catalytic</note>
    </ligand>
</feature>
<feature type="binding site" evidence="1 5">
    <location>
        <position position="87"/>
    </location>
    <ligand>
        <name>Zn(2+)</name>
        <dbReference type="ChEBI" id="CHEBI:29105"/>
        <note>catalytic</note>
    </ligand>
</feature>
<feature type="binding site" evidence="1 5">
    <location>
        <position position="90"/>
    </location>
    <ligand>
        <name>Zn(2+)</name>
        <dbReference type="ChEBI" id="CHEBI:29105"/>
        <note>catalytic</note>
    </ligand>
</feature>
<feature type="mutagenesis site" description="Resistance to the cell-killing function encoded by the gef gene family." evidence="4">
    <original>D</original>
    <variation>E</variation>
    <location>
        <position position="53"/>
    </location>
</feature>
<feature type="helix" evidence="8">
    <location>
        <begin position="8"/>
        <end position="24"/>
    </location>
</feature>
<feature type="strand" evidence="11">
    <location>
        <begin position="25"/>
        <end position="28"/>
    </location>
</feature>
<feature type="strand" evidence="8">
    <location>
        <begin position="31"/>
        <end position="36"/>
    </location>
</feature>
<feature type="strand" evidence="8">
    <location>
        <begin position="39"/>
        <end position="45"/>
    </location>
</feature>
<feature type="helix" evidence="8">
    <location>
        <begin position="48"/>
        <end position="51"/>
    </location>
</feature>
<feature type="helix" evidence="8">
    <location>
        <begin position="58"/>
        <end position="70"/>
    </location>
</feature>
<feature type="strand" evidence="8">
    <location>
        <begin position="79"/>
        <end position="84"/>
    </location>
</feature>
<feature type="helix" evidence="8">
    <location>
        <begin position="88"/>
        <end position="97"/>
    </location>
</feature>
<feature type="strand" evidence="8">
    <location>
        <begin position="100"/>
        <end position="106"/>
    </location>
</feature>
<feature type="turn" evidence="8">
    <location>
        <begin position="109"/>
        <end position="111"/>
    </location>
</feature>
<feature type="helix" evidence="10">
    <location>
        <begin position="118"/>
        <end position="121"/>
    </location>
</feature>
<feature type="strand" evidence="8">
    <location>
        <begin position="131"/>
        <end position="133"/>
    </location>
</feature>
<feature type="helix" evidence="8">
    <location>
        <begin position="138"/>
        <end position="153"/>
    </location>
</feature>
<feature type="helix" evidence="9">
    <location>
        <begin position="158"/>
        <end position="160"/>
    </location>
</feature>
<name>TADA_ECOLI</name>
<organism>
    <name type="scientific">Escherichia coli (strain K12)</name>
    <dbReference type="NCBI Taxonomy" id="83333"/>
    <lineage>
        <taxon>Bacteria</taxon>
        <taxon>Pseudomonadati</taxon>
        <taxon>Pseudomonadota</taxon>
        <taxon>Gammaproteobacteria</taxon>
        <taxon>Enterobacterales</taxon>
        <taxon>Enterobacteriaceae</taxon>
        <taxon>Escherichia</taxon>
    </lineage>
</organism>
<protein>
    <recommendedName>
        <fullName evidence="1">tRNA-specific adenosine deaminase</fullName>
        <ecNumber evidence="1">3.5.4.33</ecNumber>
    </recommendedName>
</protein>
<proteinExistence type="evidence at protein level"/>